<organism>
    <name type="scientific">Cereibacter sphaeroides (strain ATCC 17025 / ATH 2.4.3)</name>
    <name type="common">Rhodobacter sphaeroides</name>
    <dbReference type="NCBI Taxonomy" id="349102"/>
    <lineage>
        <taxon>Bacteria</taxon>
        <taxon>Pseudomonadati</taxon>
        <taxon>Pseudomonadota</taxon>
        <taxon>Alphaproteobacteria</taxon>
        <taxon>Rhodobacterales</taxon>
        <taxon>Paracoccaceae</taxon>
        <taxon>Cereibacter</taxon>
    </lineage>
</organism>
<reference key="1">
    <citation type="submission" date="2007-04" db="EMBL/GenBank/DDBJ databases">
        <title>Complete sequence of chromosome of Rhodobacter sphaeroides ATCC 17025.</title>
        <authorList>
            <consortium name="US DOE Joint Genome Institute"/>
            <person name="Copeland A."/>
            <person name="Lucas S."/>
            <person name="Lapidus A."/>
            <person name="Barry K."/>
            <person name="Detter J.C."/>
            <person name="Glavina del Rio T."/>
            <person name="Hammon N."/>
            <person name="Israni S."/>
            <person name="Dalin E."/>
            <person name="Tice H."/>
            <person name="Pitluck S."/>
            <person name="Chertkov O."/>
            <person name="Brettin T."/>
            <person name="Bruce D."/>
            <person name="Han C."/>
            <person name="Schmutz J."/>
            <person name="Larimer F."/>
            <person name="Land M."/>
            <person name="Hauser L."/>
            <person name="Kyrpides N."/>
            <person name="Kim E."/>
            <person name="Richardson P."/>
            <person name="Mackenzie C."/>
            <person name="Choudhary M."/>
            <person name="Donohue T.J."/>
            <person name="Kaplan S."/>
        </authorList>
    </citation>
    <scope>NUCLEOTIDE SEQUENCE [LARGE SCALE GENOMIC DNA]</scope>
    <source>
        <strain>ATCC 17025 / ATH 2.4.3</strain>
    </source>
</reference>
<keyword id="KW-0963">Cytoplasm</keyword>
<keyword id="KW-0488">Methylation</keyword>
<keyword id="KW-0648">Protein biosynthesis</keyword>
<accession>A4WRK0</accession>
<feature type="chain" id="PRO_1000004940" description="Peptide chain release factor 1">
    <location>
        <begin position="1"/>
        <end position="351"/>
    </location>
</feature>
<feature type="modified residue" description="N5-methylglutamine" evidence="1">
    <location>
        <position position="229"/>
    </location>
</feature>
<name>RF1_CERS5</name>
<sequence>MVPMDRLLQIVRRFEFLEARLSAGAAPAEIAALSREYAELKPVVAEIAAYRTALEDLAEAEAMLADPEMRALAEDELPRLRARIPEMEQALRLALLPRDAADARPAILEIRPGTGGEEAALFAGDLLRMYQRYAEAQGWRFELLDLAPSELGGIREATARIEGEGAFARLKYESGVHRVQRVPETEAQGRIHTSAATVAVLPEAEEVDIAIPAADIRIDTMRSSGAGGQHVNTTDSAVRITHLPTGIVVTSSEKSQHRNREIAMQVLRARLYDLERQRLAEARSADRKAQVGSGDRSERIRTYNFPQGRMTDHRINLTLYALPQIMAGDLAEVIAALTAHDQAARLAEMEA</sequence>
<protein>
    <recommendedName>
        <fullName evidence="1">Peptide chain release factor 1</fullName>
        <shortName evidence="1">RF-1</shortName>
    </recommendedName>
</protein>
<dbReference type="EMBL" id="CP000661">
    <property type="protein sequence ID" value="ABP70014.1"/>
    <property type="molecule type" value="Genomic_DNA"/>
</dbReference>
<dbReference type="SMR" id="A4WRK0"/>
<dbReference type="STRING" id="349102.Rsph17025_1113"/>
<dbReference type="KEGG" id="rsq:Rsph17025_1113"/>
<dbReference type="eggNOG" id="COG0216">
    <property type="taxonomic scope" value="Bacteria"/>
</dbReference>
<dbReference type="HOGENOM" id="CLU_036856_0_1_5"/>
<dbReference type="BioCyc" id="RSPH349102:G1G8M-1140-MONOMER"/>
<dbReference type="GO" id="GO:0005737">
    <property type="term" value="C:cytoplasm"/>
    <property type="evidence" value="ECO:0007669"/>
    <property type="project" value="UniProtKB-SubCell"/>
</dbReference>
<dbReference type="GO" id="GO:0016149">
    <property type="term" value="F:translation release factor activity, codon specific"/>
    <property type="evidence" value="ECO:0007669"/>
    <property type="project" value="UniProtKB-UniRule"/>
</dbReference>
<dbReference type="FunFam" id="3.30.160.20:FF:000004">
    <property type="entry name" value="Peptide chain release factor 1"/>
    <property type="match status" value="1"/>
</dbReference>
<dbReference type="FunFam" id="3.30.70.1660:FF:000002">
    <property type="entry name" value="Peptide chain release factor 1"/>
    <property type="match status" value="1"/>
</dbReference>
<dbReference type="FunFam" id="3.30.70.1660:FF:000004">
    <property type="entry name" value="Peptide chain release factor 1"/>
    <property type="match status" value="1"/>
</dbReference>
<dbReference type="Gene3D" id="3.30.160.20">
    <property type="match status" value="1"/>
</dbReference>
<dbReference type="Gene3D" id="3.30.70.1660">
    <property type="match status" value="1"/>
</dbReference>
<dbReference type="Gene3D" id="6.10.140.1950">
    <property type="match status" value="1"/>
</dbReference>
<dbReference type="HAMAP" id="MF_00093">
    <property type="entry name" value="Rel_fac_1"/>
    <property type="match status" value="1"/>
</dbReference>
<dbReference type="InterPro" id="IPR005139">
    <property type="entry name" value="PCRF"/>
</dbReference>
<dbReference type="InterPro" id="IPR000352">
    <property type="entry name" value="Pep_chain_release_fac_I"/>
</dbReference>
<dbReference type="InterPro" id="IPR045853">
    <property type="entry name" value="Pep_chain_release_fac_I_sf"/>
</dbReference>
<dbReference type="InterPro" id="IPR050057">
    <property type="entry name" value="Prokaryotic/Mito_RF"/>
</dbReference>
<dbReference type="InterPro" id="IPR004373">
    <property type="entry name" value="RF-1"/>
</dbReference>
<dbReference type="NCBIfam" id="TIGR00019">
    <property type="entry name" value="prfA"/>
    <property type="match status" value="1"/>
</dbReference>
<dbReference type="NCBIfam" id="NF001859">
    <property type="entry name" value="PRK00591.1"/>
    <property type="match status" value="1"/>
</dbReference>
<dbReference type="PANTHER" id="PTHR43804">
    <property type="entry name" value="LD18447P"/>
    <property type="match status" value="1"/>
</dbReference>
<dbReference type="PANTHER" id="PTHR43804:SF7">
    <property type="entry name" value="LD18447P"/>
    <property type="match status" value="1"/>
</dbReference>
<dbReference type="Pfam" id="PF03462">
    <property type="entry name" value="PCRF"/>
    <property type="match status" value="1"/>
</dbReference>
<dbReference type="Pfam" id="PF00472">
    <property type="entry name" value="RF-1"/>
    <property type="match status" value="1"/>
</dbReference>
<dbReference type="SMART" id="SM00937">
    <property type="entry name" value="PCRF"/>
    <property type="match status" value="1"/>
</dbReference>
<dbReference type="SUPFAM" id="SSF75620">
    <property type="entry name" value="Release factor"/>
    <property type="match status" value="1"/>
</dbReference>
<dbReference type="PROSITE" id="PS00745">
    <property type="entry name" value="RF_PROK_I"/>
    <property type="match status" value="1"/>
</dbReference>
<proteinExistence type="inferred from homology"/>
<comment type="function">
    <text evidence="1">Peptide chain release factor 1 directs the termination of translation in response to the peptide chain termination codons UAG and UAA.</text>
</comment>
<comment type="subcellular location">
    <subcellularLocation>
        <location evidence="1">Cytoplasm</location>
    </subcellularLocation>
</comment>
<comment type="PTM">
    <text evidence="1">Methylated by PrmC. Methylation increases the termination efficiency of RF1.</text>
</comment>
<comment type="similarity">
    <text evidence="1">Belongs to the prokaryotic/mitochondrial release factor family.</text>
</comment>
<gene>
    <name evidence="1" type="primary">prfA</name>
    <name type="ordered locus">Rsph17025_1113</name>
</gene>
<evidence type="ECO:0000255" key="1">
    <source>
        <dbReference type="HAMAP-Rule" id="MF_00093"/>
    </source>
</evidence>